<sequence>MRGVLRGLAVVVEDVEFGRRLYKEGFYGRFLGYDKVKREEVDRINAPLVLALYEALYLVERGVLEVVTDSGEKITQTRLVELGREKLKNFDEIYKIYKYFRDLGYVVKSGLKFGALFSVYEKGPGIDHAPMVVVFLEPDKGISATDITRGGRLGHSVKKTFTLATVLKNTGEVILLGFSWARL</sequence>
<name>ENDA_PYRAR</name>
<keyword id="KW-0456">Lyase</keyword>
<keyword id="KW-0819">tRNA processing</keyword>
<proteinExistence type="inferred from homology"/>
<comment type="function">
    <text evidence="1">Endonuclease that removes tRNA introns. Cleaves pre-tRNA at the 5'- and 3'-splice sites to release the intron. The products are an intron and two tRNA half-molecules bearing 2',3' cyclic phosphate and 5'-OH termini. Recognizes a pseudosymmetric substrate in which 2 bulged loops of 3 bases are separated by a stem of 4 bp.</text>
</comment>
<comment type="catalytic activity">
    <reaction evidence="1">
        <text>pretRNA = a 3'-half-tRNA molecule with a 5'-OH end + a 5'-half-tRNA molecule with a 2',3'-cyclic phosphate end + an intron with a 2',3'-cyclic phosphate and a 5'-hydroxyl terminus.</text>
        <dbReference type="EC" id="4.6.1.16"/>
    </reaction>
</comment>
<comment type="subunit">
    <text evidence="1">Homotetramer; although the tetramer contains four active sites, only two participate in the cleavage. Therefore, it should be considered as a dimer of dimers.</text>
</comment>
<comment type="similarity">
    <text evidence="1">Belongs to the tRNA-intron endonuclease family. Archaeal short subfamily.</text>
</comment>
<gene>
    <name evidence="1" type="primary">endA</name>
    <name type="ordered locus">Pars_1819</name>
</gene>
<reference key="1">
    <citation type="submission" date="2007-04" db="EMBL/GenBank/DDBJ databases">
        <title>Complete sequence of Pyrobaculum arsenaticum DSM 13514.</title>
        <authorList>
            <consortium name="US DOE Joint Genome Institute"/>
            <person name="Copeland A."/>
            <person name="Lucas S."/>
            <person name="Lapidus A."/>
            <person name="Barry K."/>
            <person name="Glavina del Rio T."/>
            <person name="Dalin E."/>
            <person name="Tice H."/>
            <person name="Pitluck S."/>
            <person name="Chain P."/>
            <person name="Malfatti S."/>
            <person name="Shin M."/>
            <person name="Vergez L."/>
            <person name="Schmutz J."/>
            <person name="Larimer F."/>
            <person name="Land M."/>
            <person name="Hauser L."/>
            <person name="Kyrpides N."/>
            <person name="Mikhailova N."/>
            <person name="Cozen A.E."/>
            <person name="Fitz-Gibbon S.T."/>
            <person name="House C.H."/>
            <person name="Saltikov C."/>
            <person name="Lowe T.M."/>
            <person name="Richardson P."/>
        </authorList>
    </citation>
    <scope>NUCLEOTIDE SEQUENCE [LARGE SCALE GENOMIC DNA]</scope>
    <source>
        <strain>ATCC 700994 / DSM 13514 / JCM 11321 / PZ6</strain>
    </source>
</reference>
<protein>
    <recommendedName>
        <fullName evidence="1">tRNA-splicing endonuclease</fullName>
        <ecNumber evidence="1">4.6.1.16</ecNumber>
    </recommendedName>
    <alternativeName>
        <fullName evidence="1">tRNA-intron endonuclease</fullName>
    </alternativeName>
</protein>
<feature type="chain" id="PRO_0000309821" description="tRNA-splicing endonuclease">
    <location>
        <begin position="1"/>
        <end position="183"/>
    </location>
</feature>
<feature type="active site" evidence="1">
    <location>
        <position position="120"/>
    </location>
</feature>
<feature type="active site" evidence="1">
    <location>
        <position position="128"/>
    </location>
</feature>
<feature type="active site" evidence="1">
    <location>
        <position position="159"/>
    </location>
</feature>
<dbReference type="EC" id="4.6.1.16" evidence="1"/>
<dbReference type="EMBL" id="CP000660">
    <property type="protein sequence ID" value="ABP51370.1"/>
    <property type="molecule type" value="Genomic_DNA"/>
</dbReference>
<dbReference type="SMR" id="A4WLV3"/>
<dbReference type="STRING" id="340102.Pars_1819"/>
<dbReference type="KEGG" id="pas:Pars_1819"/>
<dbReference type="HOGENOM" id="CLU_114393_0_0_2"/>
<dbReference type="OrthoDB" id="46045at2157"/>
<dbReference type="PhylomeDB" id="A4WLV3"/>
<dbReference type="Proteomes" id="UP000001567">
    <property type="component" value="Chromosome"/>
</dbReference>
<dbReference type="GO" id="GO:0005737">
    <property type="term" value="C:cytoplasm"/>
    <property type="evidence" value="ECO:0007669"/>
    <property type="project" value="TreeGrafter"/>
</dbReference>
<dbReference type="GO" id="GO:0016829">
    <property type="term" value="F:lyase activity"/>
    <property type="evidence" value="ECO:0007669"/>
    <property type="project" value="UniProtKB-KW"/>
</dbReference>
<dbReference type="GO" id="GO:0003676">
    <property type="term" value="F:nucleic acid binding"/>
    <property type="evidence" value="ECO:0007669"/>
    <property type="project" value="InterPro"/>
</dbReference>
<dbReference type="GO" id="GO:0000213">
    <property type="term" value="F:tRNA-intron endonuclease activity"/>
    <property type="evidence" value="ECO:0007669"/>
    <property type="project" value="UniProtKB-UniRule"/>
</dbReference>
<dbReference type="GO" id="GO:0006388">
    <property type="term" value="P:tRNA splicing, via endonucleolytic cleavage and ligation"/>
    <property type="evidence" value="ECO:0007669"/>
    <property type="project" value="UniProtKB-UniRule"/>
</dbReference>
<dbReference type="CDD" id="cd22363">
    <property type="entry name" value="tRNA-intron_lyase_C"/>
    <property type="match status" value="1"/>
</dbReference>
<dbReference type="FunFam" id="3.40.1350.10:FF:000006">
    <property type="entry name" value="tRNA-splicing endonuclease"/>
    <property type="match status" value="1"/>
</dbReference>
<dbReference type="Gene3D" id="3.40.1350.10">
    <property type="match status" value="1"/>
</dbReference>
<dbReference type="Gene3D" id="3.40.1170.20">
    <property type="entry name" value="tRNA intron endonuclease, N-terminal domain"/>
    <property type="match status" value="1"/>
</dbReference>
<dbReference type="HAMAP" id="MF_01833">
    <property type="entry name" value="EndA_short"/>
    <property type="match status" value="1"/>
</dbReference>
<dbReference type="InterPro" id="IPR011856">
    <property type="entry name" value="tRNA_endonuc-like_dom_sf"/>
</dbReference>
<dbReference type="InterPro" id="IPR036167">
    <property type="entry name" value="tRNA_intron_Endo_cat-like_sf"/>
</dbReference>
<dbReference type="InterPro" id="IPR006677">
    <property type="entry name" value="tRNA_intron_Endonuc_cat-like"/>
</dbReference>
<dbReference type="InterPro" id="IPR006678">
    <property type="entry name" value="tRNA_intron_Endonuc_N"/>
</dbReference>
<dbReference type="InterPro" id="IPR036740">
    <property type="entry name" value="tRNA_intron_Endonuc_N_sf"/>
</dbReference>
<dbReference type="InterPro" id="IPR006676">
    <property type="entry name" value="tRNA_splic"/>
</dbReference>
<dbReference type="InterPro" id="IPR016442">
    <property type="entry name" value="tRNA_splic_arch_short"/>
</dbReference>
<dbReference type="NCBIfam" id="TIGR00324">
    <property type="entry name" value="endA"/>
    <property type="match status" value="1"/>
</dbReference>
<dbReference type="PANTHER" id="PTHR21227">
    <property type="entry name" value="TRNA-SPLICING ENDONUCLEASE SUBUNIT SEN2"/>
    <property type="match status" value="1"/>
</dbReference>
<dbReference type="PANTHER" id="PTHR21227:SF0">
    <property type="entry name" value="TRNA-SPLICING ENDONUCLEASE SUBUNIT SEN2"/>
    <property type="match status" value="1"/>
</dbReference>
<dbReference type="Pfam" id="PF01974">
    <property type="entry name" value="tRNA_int_endo"/>
    <property type="match status" value="1"/>
</dbReference>
<dbReference type="Pfam" id="PF02778">
    <property type="entry name" value="tRNA_int_endo_N"/>
    <property type="match status" value="1"/>
</dbReference>
<dbReference type="PIRSF" id="PIRSF005285">
    <property type="entry name" value="tRNA_splic_archaea"/>
    <property type="match status" value="1"/>
</dbReference>
<dbReference type="SUPFAM" id="SSF53032">
    <property type="entry name" value="tRNA-intron endonuclease catalytic domain-like"/>
    <property type="match status" value="1"/>
</dbReference>
<dbReference type="SUPFAM" id="SSF55267">
    <property type="entry name" value="tRNA-intron endonuclease N-terminal domain-like"/>
    <property type="match status" value="1"/>
</dbReference>
<accession>A4WLV3</accession>
<organism>
    <name type="scientific">Pyrobaculum arsenaticum (strain DSM 13514 / JCM 11321 / PZ6)</name>
    <dbReference type="NCBI Taxonomy" id="340102"/>
    <lineage>
        <taxon>Archaea</taxon>
        <taxon>Thermoproteota</taxon>
        <taxon>Thermoprotei</taxon>
        <taxon>Thermoproteales</taxon>
        <taxon>Thermoproteaceae</taxon>
        <taxon>Pyrobaculum</taxon>
    </lineage>
</organism>
<evidence type="ECO:0000255" key="1">
    <source>
        <dbReference type="HAMAP-Rule" id="MF_01833"/>
    </source>
</evidence>